<keyword id="KW-0963">Cytoplasm</keyword>
<keyword id="KW-0648">Protein biosynthesis</keyword>
<keyword id="KW-1185">Reference proteome</keyword>
<sequence>MANPILEQAKENMEKAEASLRRTLGQIRAGRANASLVNRVNVEYYGAMTPLNQIAAITIPEARVLLITPYDKGALEDIEKALYTADIGISPANDGSVIRLVIPQLTGERRKEIAKEVGKEAELAKVVVRNARRDAMDNLKKAEKASEISEDEMHDLEEQVQNLTNEATKKIDAISKDKEKEITEG</sequence>
<organism>
    <name type="scientific">Latilactobacillus sakei subsp. sakei (strain 23K)</name>
    <name type="common">Lactobacillus sakei subsp. sakei</name>
    <dbReference type="NCBI Taxonomy" id="314315"/>
    <lineage>
        <taxon>Bacteria</taxon>
        <taxon>Bacillati</taxon>
        <taxon>Bacillota</taxon>
        <taxon>Bacilli</taxon>
        <taxon>Lactobacillales</taxon>
        <taxon>Lactobacillaceae</taxon>
        <taxon>Latilactobacillus</taxon>
    </lineage>
</organism>
<gene>
    <name evidence="1" type="primary">frr</name>
    <name type="ordered locus">LCA_1262</name>
</gene>
<feature type="chain" id="PRO_1000003188" description="Ribosome-recycling factor">
    <location>
        <begin position="1"/>
        <end position="185"/>
    </location>
</feature>
<feature type="region of interest" description="Disordered" evidence="2">
    <location>
        <begin position="163"/>
        <end position="185"/>
    </location>
</feature>
<feature type="compositionally biased region" description="Basic and acidic residues" evidence="2">
    <location>
        <begin position="167"/>
        <end position="185"/>
    </location>
</feature>
<protein>
    <recommendedName>
        <fullName evidence="1">Ribosome-recycling factor</fullName>
        <shortName evidence="1">RRF</shortName>
    </recommendedName>
    <alternativeName>
        <fullName evidence="1">Ribosome-releasing factor</fullName>
    </alternativeName>
</protein>
<comment type="function">
    <text evidence="1">Responsible for the release of ribosomes from messenger RNA at the termination of protein biosynthesis. May increase the efficiency of translation by recycling ribosomes from one round of translation to another.</text>
</comment>
<comment type="subcellular location">
    <subcellularLocation>
        <location evidence="1">Cytoplasm</location>
    </subcellularLocation>
</comment>
<comment type="similarity">
    <text evidence="1">Belongs to the RRF family.</text>
</comment>
<reference key="1">
    <citation type="journal article" date="2005" name="Nat. Biotechnol.">
        <title>The complete genome sequence of the meat-borne lactic acid bacterium Lactobacillus sakei 23K.</title>
        <authorList>
            <person name="Chaillou S."/>
            <person name="Champomier-Verges M.-C."/>
            <person name="Cornet M."/>
            <person name="Crutz-Le Coq A.-M."/>
            <person name="Dudez A.-M."/>
            <person name="Martin V."/>
            <person name="Beaufils S."/>
            <person name="Darbon-Rongere E."/>
            <person name="Bossy R."/>
            <person name="Loux V."/>
            <person name="Zagorec M."/>
        </authorList>
    </citation>
    <scope>NUCLEOTIDE SEQUENCE [LARGE SCALE GENOMIC DNA]</scope>
    <source>
        <strain>23K</strain>
    </source>
</reference>
<proteinExistence type="inferred from homology"/>
<evidence type="ECO:0000255" key="1">
    <source>
        <dbReference type="HAMAP-Rule" id="MF_00040"/>
    </source>
</evidence>
<evidence type="ECO:0000256" key="2">
    <source>
        <dbReference type="SAM" id="MobiDB-lite"/>
    </source>
</evidence>
<name>RRF_LATSS</name>
<dbReference type="EMBL" id="CR936503">
    <property type="protein sequence ID" value="CAI55566.1"/>
    <property type="molecule type" value="Genomic_DNA"/>
</dbReference>
<dbReference type="RefSeq" id="WP_011374959.1">
    <property type="nucleotide sequence ID" value="NC_007576.1"/>
</dbReference>
<dbReference type="SMR" id="Q38W67"/>
<dbReference type="STRING" id="314315.LCA_1262"/>
<dbReference type="KEGG" id="lsa:LCA_1262"/>
<dbReference type="eggNOG" id="COG0233">
    <property type="taxonomic scope" value="Bacteria"/>
</dbReference>
<dbReference type="HOGENOM" id="CLU_073981_2_0_9"/>
<dbReference type="OrthoDB" id="9804006at2"/>
<dbReference type="Proteomes" id="UP000002707">
    <property type="component" value="Chromosome"/>
</dbReference>
<dbReference type="GO" id="GO:0005737">
    <property type="term" value="C:cytoplasm"/>
    <property type="evidence" value="ECO:0007669"/>
    <property type="project" value="UniProtKB-SubCell"/>
</dbReference>
<dbReference type="GO" id="GO:0043023">
    <property type="term" value="F:ribosomal large subunit binding"/>
    <property type="evidence" value="ECO:0007669"/>
    <property type="project" value="TreeGrafter"/>
</dbReference>
<dbReference type="GO" id="GO:0006415">
    <property type="term" value="P:translational termination"/>
    <property type="evidence" value="ECO:0007669"/>
    <property type="project" value="UniProtKB-UniRule"/>
</dbReference>
<dbReference type="CDD" id="cd00520">
    <property type="entry name" value="RRF"/>
    <property type="match status" value="1"/>
</dbReference>
<dbReference type="FunFam" id="1.10.132.20:FF:000001">
    <property type="entry name" value="Ribosome-recycling factor"/>
    <property type="match status" value="1"/>
</dbReference>
<dbReference type="FunFam" id="3.30.1360.40:FF:000001">
    <property type="entry name" value="Ribosome-recycling factor"/>
    <property type="match status" value="1"/>
</dbReference>
<dbReference type="Gene3D" id="3.30.1360.40">
    <property type="match status" value="1"/>
</dbReference>
<dbReference type="Gene3D" id="1.10.132.20">
    <property type="entry name" value="Ribosome-recycling factor"/>
    <property type="match status" value="1"/>
</dbReference>
<dbReference type="HAMAP" id="MF_00040">
    <property type="entry name" value="RRF"/>
    <property type="match status" value="1"/>
</dbReference>
<dbReference type="InterPro" id="IPR002661">
    <property type="entry name" value="Ribosome_recyc_fac"/>
</dbReference>
<dbReference type="InterPro" id="IPR023584">
    <property type="entry name" value="Ribosome_recyc_fac_dom"/>
</dbReference>
<dbReference type="InterPro" id="IPR036191">
    <property type="entry name" value="RRF_sf"/>
</dbReference>
<dbReference type="NCBIfam" id="TIGR00496">
    <property type="entry name" value="frr"/>
    <property type="match status" value="1"/>
</dbReference>
<dbReference type="PANTHER" id="PTHR20982:SF3">
    <property type="entry name" value="MITOCHONDRIAL RIBOSOME RECYCLING FACTOR PSEUDO 1"/>
    <property type="match status" value="1"/>
</dbReference>
<dbReference type="PANTHER" id="PTHR20982">
    <property type="entry name" value="RIBOSOME RECYCLING FACTOR"/>
    <property type="match status" value="1"/>
</dbReference>
<dbReference type="Pfam" id="PF01765">
    <property type="entry name" value="RRF"/>
    <property type="match status" value="1"/>
</dbReference>
<dbReference type="SUPFAM" id="SSF55194">
    <property type="entry name" value="Ribosome recycling factor, RRF"/>
    <property type="match status" value="1"/>
</dbReference>
<accession>Q38W67</accession>